<sequence>MHKAGLLGLCARAWNSVRMASSGMTRRDPLANKVALVTASTDGIGFAIARRLAQDGAHVVVSSRKQQNVDQAVATLQGEGLSVTGTVCHVGKAEDRERLVATAVKLHGGIDILVSNAAVNPFFGSIMDVTEEVWDKTLDINVKAPALMTKAVVPEMEKRGGGSVVIVSSIAAFSPSPGFSPYNVSKTALLGLTKTLAIELAPRNIRVNCLAPGLIKTSFSRMLWMDKEKEESMKETLRIRRLGEPEDCAGIVSFLCSEDASYITGETVVVGGGTPSRL</sequence>
<organism>
    <name type="scientific">Homo sapiens</name>
    <name type="common">Human</name>
    <dbReference type="NCBI Taxonomy" id="9606"/>
    <lineage>
        <taxon>Eukaryota</taxon>
        <taxon>Metazoa</taxon>
        <taxon>Chordata</taxon>
        <taxon>Craniata</taxon>
        <taxon>Vertebrata</taxon>
        <taxon>Euteleostomi</taxon>
        <taxon>Mammalia</taxon>
        <taxon>Eutheria</taxon>
        <taxon>Euarchontoglires</taxon>
        <taxon>Primates</taxon>
        <taxon>Haplorrhini</taxon>
        <taxon>Catarrhini</taxon>
        <taxon>Hominidae</taxon>
        <taxon>Homo</taxon>
    </lineage>
</organism>
<feature type="chain" id="PRO_0000054647" description="Dehydrogenase/reductase SDR family member 4">
    <location>
        <begin position="1"/>
        <end position="278"/>
    </location>
</feature>
<feature type="short sequence motif" description="Peroxisomal targeting signal" evidence="1">
    <location>
        <begin position="276"/>
        <end position="278"/>
    </location>
</feature>
<feature type="active site" description="Proton acceptor" evidence="4">
    <location>
        <position position="182"/>
    </location>
</feature>
<feature type="binding site" evidence="1">
    <location>
        <begin position="36"/>
        <end position="60"/>
    </location>
    <ligand>
        <name>NADP(+)</name>
        <dbReference type="ChEBI" id="CHEBI:58349"/>
    </ligand>
</feature>
<feature type="binding site" evidence="2">
    <location>
        <position position="169"/>
    </location>
    <ligand>
        <name>substrate</name>
    </ligand>
</feature>
<feature type="binding site" evidence="1">
    <location>
        <position position="186"/>
    </location>
    <ligand>
        <name>NADP(+)</name>
        <dbReference type="ChEBI" id="CHEBI:58349"/>
    </ligand>
</feature>
<feature type="site" description="Responsible for the stereoselective reduction of 3-ketosteroids into 3beta-hydroxysteroids and benzil into R-benzoin" evidence="8">
    <location>
        <position position="176"/>
    </location>
</feature>
<feature type="site" description="Responsible for the stereoselective reduction of 3-ketosteroids into 3beta-hydroxysteroids and benzil into R-benzoin" evidence="8">
    <location>
        <position position="179"/>
    </location>
</feature>
<feature type="modified residue" description="N6-acetyllysine; alternate" evidence="3">
    <location>
        <position position="92"/>
    </location>
</feature>
<feature type="modified residue" description="N6-succinyllysine; alternate" evidence="3">
    <location>
        <position position="92"/>
    </location>
</feature>
<feature type="modified residue" description="N6-acetyllysine" evidence="3">
    <location>
        <position position="105"/>
    </location>
</feature>
<feature type="modified residue" description="N6-acetyllysine; alternate" evidence="3">
    <location>
        <position position="216"/>
    </location>
</feature>
<feature type="modified residue" description="N6-succinyllysine; alternate" evidence="3">
    <location>
        <position position="216"/>
    </location>
</feature>
<feature type="modified residue" description="Phosphoserine" evidence="3">
    <location>
        <position position="220"/>
    </location>
</feature>
<feature type="modified residue" description="N6-succinyllysine" evidence="3">
    <location>
        <position position="227"/>
    </location>
</feature>
<feature type="modified residue" description="N6-succinyllysine" evidence="3">
    <location>
        <position position="234"/>
    </location>
</feature>
<feature type="splice variant" id="VSP_044947" description="In isoform 8." evidence="18">
    <location>
        <begin position="1"/>
        <end position="18"/>
    </location>
</feature>
<feature type="splice variant" id="VSP_031435" description="In isoform 6." evidence="14">
    <location>
        <begin position="19"/>
        <end position="221"/>
    </location>
</feature>
<feature type="splice variant" id="VSP_008585" description="In isoform 3." evidence="12">
    <location>
        <begin position="103"/>
        <end position="222"/>
    </location>
</feature>
<feature type="splice variant" id="VSP_031436" description="In isoform 4, isoform 5 and isoform 8." evidence="14">
    <location>
        <begin position="103"/>
        <end position="136"/>
    </location>
</feature>
<feature type="splice variant" id="VSP_008586" description="In isoform 2." evidence="12 13">
    <location>
        <begin position="137"/>
        <end position="222"/>
    </location>
</feature>
<feature type="splice variant" id="VSP_031437" description="In isoform 7." evidence="17">
    <original>TLDINVKAPALMTKAVVPEMEKRGGGSVVIVSSIAAFSPSPGFSPYNVSKTA</original>
    <variation>RRLSGDRVFHSSLQSISSLDGQGKRGKHERNPADKKVRRARGLCWHRVFPVL</variation>
    <location>
        <begin position="137"/>
        <end position="188"/>
    </location>
</feature>
<feature type="splice variant" id="VSP_031438" description="In isoform 5." evidence="14">
    <location>
        <begin position="178"/>
        <end position="222"/>
    </location>
</feature>
<feature type="splice variant" id="VSP_031439" description="In isoform 7." evidence="17">
    <location>
        <begin position="189"/>
        <end position="278"/>
    </location>
</feature>
<feature type="sequence variant" id="VAR_057272" description="In dbSNP:rs1043442.">
    <original>A</original>
    <variation>T</variation>
    <location>
        <position position="31"/>
    </location>
</feature>
<feature type="sequence variant" id="VAR_061846" description="In dbSNP:rs1043650.">
    <original>P</original>
    <variation>S</variation>
    <location>
        <position position="202"/>
    </location>
</feature>
<feature type="mutagenesis site" description="Decreased reduction activity for benzil, isatin and retinal and increased activity for 5beta-Pregnane-3,20-dione and 5beta-Dihydrotestosterone. No change of stereoselectivity in 3-ketosteroids reduction and no change in 3beta-hydroxysteroid oxidation. Decreased reduction activity for isatin and increased activity for 5beta-Pregnane-3,20-dione, 5beta-Dihydrotestosterone, benzil and retinal; when associated with L-179. Change in stereoselective activity by the reduction of 5beta-Pregnane-3,20-dione predominantly to the 3alpha-hydroxysteroid; when associated with L-179. Switch from 3beta-hydroxysteroid to 3alpha-hydroxysteroid oxidation; when associated with L-179. Loss of cold catalytic inactivation; when associated with L-179 and N-195. Increased reduction activity for renital and oxidation activity for retinol; when associated with L-179 and N-195." evidence="8">
    <original>S</original>
    <variation>F</variation>
    <location>
        <position position="176"/>
    </location>
</feature>
<feature type="mutagenesis site" description="Decreased reduction activity for isatin and increased activity for 5beta-Pregnane-3,20-dione, 5beta-Dihydrotestosterone, benzil and retinal; when associated with F-176. Change in stereoselective activity by the reduction of 5beta-Pregnane-3,20-dione predominantly to the 3alpha-hydroxysteroid; when associated with F-176. Switch from 3beta-hydroxysteroid to 3alpha-hydroxysteroid oxidation; when associated with F-176. Loss of cold catalytic inactivation; when associated with F-176 and N-195. Increased reduction activity for renital and oxidation activity for retinol; when associated with F-176 and N-195." evidence="8">
    <original>F</original>
    <variation>L</variation>
    <location>
        <position position="179"/>
    </location>
</feature>
<feature type="mutagenesis site" description="Loss of cold catalytic inactivation. Loss of cold catalytic inactivation; when associated with F-176 and L-179. Switch in stereoselective activity from 3beta-hydroxysteroid to 3alpha-hydroxysteroid oxidation; when associated with F-176 and L-179. Increased reduction activity for renital and oxidation activity for retinol; when associated with F-176 and L-179." evidence="7 8">
    <original>T</original>
    <variation>N</variation>
    <location>
        <position position="195"/>
    </location>
</feature>
<feature type="sequence conflict" description="In Ref. 8; BAA91953." evidence="18" ref="8">
    <original>V</original>
    <variation>A</variation>
    <location>
        <position position="37"/>
    </location>
</feature>
<feature type="sequence conflict" description="In Ref. 7; ABC61321." evidence="18" ref="7">
    <original>R</original>
    <variation>W</variation>
    <location>
        <position position="50"/>
    </location>
</feature>
<feature type="sequence conflict" description="In Ref. 4; AAQ13444." evidence="18" ref="4">
    <original>H</original>
    <variation>M</variation>
    <location>
        <position position="89"/>
    </location>
</feature>
<feature type="sequence conflict" description="In Ref. 1; AAD02292." evidence="18" ref="1">
    <original>T</original>
    <variation>M</variation>
    <location>
        <position position="102"/>
    </location>
</feature>
<feature type="sequence conflict" description="In Ref. 1; AAD02292." evidence="18" ref="1">
    <original>I</original>
    <variation>L</variation>
    <location>
        <position position="126"/>
    </location>
</feature>
<feature type="turn" evidence="24">
    <location>
        <begin position="29"/>
        <end position="32"/>
    </location>
</feature>
<feature type="strand" evidence="24">
    <location>
        <begin position="34"/>
        <end position="39"/>
    </location>
</feature>
<feature type="helix" evidence="24">
    <location>
        <begin position="43"/>
        <end position="54"/>
    </location>
</feature>
<feature type="strand" evidence="24">
    <location>
        <begin position="58"/>
        <end position="64"/>
    </location>
</feature>
<feature type="helix" evidence="24">
    <location>
        <begin position="66"/>
        <end position="78"/>
    </location>
</feature>
<feature type="strand" evidence="24">
    <location>
        <begin position="83"/>
        <end position="87"/>
    </location>
</feature>
<feature type="helix" evidence="24">
    <location>
        <begin position="93"/>
        <end position="107"/>
    </location>
</feature>
<feature type="strand" evidence="24">
    <location>
        <begin position="112"/>
        <end position="115"/>
    </location>
</feature>
<feature type="turn" evidence="24">
    <location>
        <begin position="126"/>
        <end position="128"/>
    </location>
</feature>
<feature type="helix" evidence="24">
    <location>
        <begin position="131"/>
        <end position="141"/>
    </location>
</feature>
<feature type="helix" evidence="24">
    <location>
        <begin position="143"/>
        <end position="158"/>
    </location>
</feature>
<feature type="strand" evidence="24">
    <location>
        <begin position="162"/>
        <end position="167"/>
    </location>
</feature>
<feature type="helix" evidence="24">
    <location>
        <begin position="170"/>
        <end position="172"/>
    </location>
</feature>
<feature type="helix" evidence="24">
    <location>
        <begin position="180"/>
        <end position="200"/>
    </location>
</feature>
<feature type="helix" evidence="24">
    <location>
        <begin position="201"/>
        <end position="203"/>
    </location>
</feature>
<feature type="strand" evidence="24">
    <location>
        <begin position="205"/>
        <end position="212"/>
    </location>
</feature>
<feature type="helix" evidence="24">
    <location>
        <begin position="221"/>
        <end position="223"/>
    </location>
</feature>
<feature type="helix" evidence="24">
    <location>
        <begin position="227"/>
        <end position="237"/>
    </location>
</feature>
<feature type="helix" evidence="24">
    <location>
        <begin position="245"/>
        <end position="248"/>
    </location>
</feature>
<feature type="helix" evidence="24">
    <location>
        <begin position="249"/>
        <end position="255"/>
    </location>
</feature>
<feature type="helix" evidence="24">
    <location>
        <begin position="258"/>
        <end position="260"/>
    </location>
</feature>
<feature type="strand" evidence="24">
    <location>
        <begin position="267"/>
        <end position="271"/>
    </location>
</feature>
<feature type="modified residue" description="Phosphoserine" evidence="23">
    <location sequence="Q9BTZ2-5">
        <position position="140"/>
    </location>
</feature>
<proteinExistence type="evidence at protein level"/>
<reference key="1">
    <citation type="journal article" date="1999" name="Biochem. J.">
        <title>Identification of peroxisomal proteins by using M13 phage protein VI phage display: molecular evidence that mammalian peroxisomes contain a 2,4-dienoyl-CoA reductase.</title>
        <authorList>
            <person name="Fransen M."/>
            <person name="Van Veldhoven P.P."/>
            <person name="Subramani S."/>
        </authorList>
    </citation>
    <scope>NUCLEOTIDE SEQUENCE [MRNA] (ISOFORMS 1; 2 AND 3)</scope>
    <scope>SUBCELLULAR LOCATION</scope>
</reference>
<reference key="2">
    <citation type="submission" date="2000-06" db="EMBL/GenBank/DDBJ databases">
        <title>cDNA cloning and characterization of peroxisomal short-chain dehydrogenase / reductase that reduces all-trans retinal to retinol.</title>
        <authorList>
            <person name="Furukawa A."/>
            <person name="Ohnishi T."/>
            <person name="Huang D."/>
            <person name="Araki N."/>
            <person name="Ichikawa Y."/>
        </authorList>
    </citation>
    <scope>NUCLEOTIDE SEQUENCE [MRNA] (ISOFORM 1)</scope>
    <source>
        <tissue>Liver</tissue>
    </source>
</reference>
<reference key="3">
    <citation type="journal article" date="2004" name="Yi Chuan Xue Bao">
        <title>cDNA cloning of a short isoform of human liver NADP (H) -dependent retinol dehydrogenase/reductase and analysis of its characteristics.</title>
        <authorList>
            <person name="Du J."/>
            <person name="Huang D.-Y."/>
            <person name="Liu G.-F."/>
            <person name="Wang G.-L."/>
            <person name="Xu X.-L."/>
            <person name="Wang B."/>
            <person name="Zhu L."/>
        </authorList>
    </citation>
    <scope>NUCLEOTIDE SEQUENCE [MRNA] (ISOFORM 2)</scope>
    <source>
        <tissue>Liver</tissue>
    </source>
</reference>
<reference key="4">
    <citation type="submission" date="2004-01" db="EMBL/GenBank/DDBJ databases">
        <title>Molecular cloning and expression analysis of a novel human cDNA encoding a protein homologous to human Hep27 protein.</title>
        <authorList>
            <person name="Tu Q."/>
            <person name="Yu L."/>
            <person name="Bi A."/>
            <person name="Li N."/>
            <person name="He W."/>
            <person name="Zhao S."/>
        </authorList>
    </citation>
    <scope>NUCLEOTIDE SEQUENCE [MRNA] (ISOFORM 1)</scope>
</reference>
<reference key="5">
    <citation type="submission" date="2004-04" db="EMBL/GenBank/DDBJ databases">
        <title>A minor misassignment error inside segmental duplication (MMEISD) of DHRS4 gene in human genome sequence.</title>
        <authorList>
            <person name="Li Y.F."/>
            <person name="Liu G.-F."/>
            <person name="Song X.-H."/>
            <person name="Yang Y.M."/>
            <person name="Zhong J.C."/>
            <person name="Du K."/>
            <person name="Zhu W."/>
            <person name="Huang D.-Y."/>
        </authorList>
    </citation>
    <scope>NUCLEOTIDE SEQUENCE [MRNA] (ISOFORM 7)</scope>
</reference>
<reference key="6">
    <citation type="journal article" date="2005" name="Ai Bian Ji Bian Tu Bian">
        <title>cDNA cloning of a short isoform of human neuroblastoma NADP(H)-dependent retinol dehydrogenase/reductase and analysis of its characteristics.</title>
        <authorList>
            <person name="Li Y.F."/>
            <person name="Liu G.-F."/>
            <person name="Song X.-H."/>
            <person name="Du K."/>
            <person name="Huang D.-Y."/>
        </authorList>
    </citation>
    <scope>NUCLEOTIDE SEQUENCE [MRNA] (ISOFORM 1)</scope>
</reference>
<reference key="7">
    <citation type="journal article" date="2007" name="Int. J. Cancer">
        <title>Expression of a novel alternatively spliced variant of NADP(H)-dependent retinol dehydrogenase/reductase with deletion of exon 3 in cervical squamous carcinoma.</title>
        <authorList>
            <person name="Song X.-H."/>
            <person name="Liang B."/>
            <person name="Liu G.-F."/>
            <person name="Li R."/>
            <person name="Xie J.-P."/>
            <person name="Du K."/>
            <person name="Huang D.-Y."/>
        </authorList>
    </citation>
    <scope>NUCLEOTIDE SEQUENCE [MRNA] (ISOFORM 4)</scope>
    <scope>NUCLEOTIDE SEQUENCE [MRNA] (ISOFORM 6)</scope>
    <scope>NUCLEOTIDE SEQUENCE [MRNA] OF 40-278 (ISOFORM 5)</scope>
    <scope>SUBCELLULAR LOCATION (ISOFORM 4)</scope>
    <scope>TISSUE SPECIFICITY (ISOFORM 4)</scope>
    <source>
        <tissue>Cervix carcinoma</tissue>
        <tissue>Neuroblastoma</tissue>
    </source>
</reference>
<reference key="8">
    <citation type="journal article" date="2004" name="Nat. Genet.">
        <title>Complete sequencing and characterization of 21,243 full-length human cDNAs.</title>
        <authorList>
            <person name="Ota T."/>
            <person name="Suzuki Y."/>
            <person name="Nishikawa T."/>
            <person name="Otsuki T."/>
            <person name="Sugiyama T."/>
            <person name="Irie R."/>
            <person name="Wakamatsu A."/>
            <person name="Hayashi K."/>
            <person name="Sato H."/>
            <person name="Nagai K."/>
            <person name="Kimura K."/>
            <person name="Makita H."/>
            <person name="Sekine M."/>
            <person name="Obayashi M."/>
            <person name="Nishi T."/>
            <person name="Shibahara T."/>
            <person name="Tanaka T."/>
            <person name="Ishii S."/>
            <person name="Yamamoto J."/>
            <person name="Saito K."/>
            <person name="Kawai Y."/>
            <person name="Isono Y."/>
            <person name="Nakamura Y."/>
            <person name="Nagahari K."/>
            <person name="Murakami K."/>
            <person name="Yasuda T."/>
            <person name="Iwayanagi T."/>
            <person name="Wagatsuma M."/>
            <person name="Shiratori A."/>
            <person name="Sudo H."/>
            <person name="Hosoiri T."/>
            <person name="Kaku Y."/>
            <person name="Kodaira H."/>
            <person name="Kondo H."/>
            <person name="Sugawara M."/>
            <person name="Takahashi M."/>
            <person name="Kanda K."/>
            <person name="Yokoi T."/>
            <person name="Furuya T."/>
            <person name="Kikkawa E."/>
            <person name="Omura Y."/>
            <person name="Abe K."/>
            <person name="Kamihara K."/>
            <person name="Katsuta N."/>
            <person name="Sato K."/>
            <person name="Tanikawa M."/>
            <person name="Yamazaki M."/>
            <person name="Ninomiya K."/>
            <person name="Ishibashi T."/>
            <person name="Yamashita H."/>
            <person name="Murakawa K."/>
            <person name="Fujimori K."/>
            <person name="Tanai H."/>
            <person name="Kimata M."/>
            <person name="Watanabe M."/>
            <person name="Hiraoka S."/>
            <person name="Chiba Y."/>
            <person name="Ishida S."/>
            <person name="Ono Y."/>
            <person name="Takiguchi S."/>
            <person name="Watanabe S."/>
            <person name="Yosida M."/>
            <person name="Hotuta T."/>
            <person name="Kusano J."/>
            <person name="Kanehori K."/>
            <person name="Takahashi-Fujii A."/>
            <person name="Hara H."/>
            <person name="Tanase T.-O."/>
            <person name="Nomura Y."/>
            <person name="Togiya S."/>
            <person name="Komai F."/>
            <person name="Hara R."/>
            <person name="Takeuchi K."/>
            <person name="Arita M."/>
            <person name="Imose N."/>
            <person name="Musashino K."/>
            <person name="Yuuki H."/>
            <person name="Oshima A."/>
            <person name="Sasaki N."/>
            <person name="Aotsuka S."/>
            <person name="Yoshikawa Y."/>
            <person name="Matsunawa H."/>
            <person name="Ichihara T."/>
            <person name="Shiohata N."/>
            <person name="Sano S."/>
            <person name="Moriya S."/>
            <person name="Momiyama H."/>
            <person name="Satoh N."/>
            <person name="Takami S."/>
            <person name="Terashima Y."/>
            <person name="Suzuki O."/>
            <person name="Nakagawa S."/>
            <person name="Senoh A."/>
            <person name="Mizoguchi H."/>
            <person name="Goto Y."/>
            <person name="Shimizu F."/>
            <person name="Wakebe H."/>
            <person name="Hishigaki H."/>
            <person name="Watanabe T."/>
            <person name="Sugiyama A."/>
            <person name="Takemoto M."/>
            <person name="Kawakami B."/>
            <person name="Yamazaki M."/>
            <person name="Watanabe K."/>
            <person name="Kumagai A."/>
            <person name="Itakura S."/>
            <person name="Fukuzumi Y."/>
            <person name="Fujimori Y."/>
            <person name="Komiyama M."/>
            <person name="Tashiro H."/>
            <person name="Tanigami A."/>
            <person name="Fujiwara T."/>
            <person name="Ono T."/>
            <person name="Yamada K."/>
            <person name="Fujii Y."/>
            <person name="Ozaki K."/>
            <person name="Hirao M."/>
            <person name="Ohmori Y."/>
            <person name="Kawabata A."/>
            <person name="Hikiji T."/>
            <person name="Kobatake N."/>
            <person name="Inagaki H."/>
            <person name="Ikema Y."/>
            <person name="Okamoto S."/>
            <person name="Okitani R."/>
            <person name="Kawakami T."/>
            <person name="Noguchi S."/>
            <person name="Itoh T."/>
            <person name="Shigeta K."/>
            <person name="Senba T."/>
            <person name="Matsumura K."/>
            <person name="Nakajima Y."/>
            <person name="Mizuno T."/>
            <person name="Morinaga M."/>
            <person name="Sasaki M."/>
            <person name="Togashi T."/>
            <person name="Oyama M."/>
            <person name="Hata H."/>
            <person name="Watanabe M."/>
            <person name="Komatsu T."/>
            <person name="Mizushima-Sugano J."/>
            <person name="Satoh T."/>
            <person name="Shirai Y."/>
            <person name="Takahashi Y."/>
            <person name="Nakagawa K."/>
            <person name="Okumura K."/>
            <person name="Nagase T."/>
            <person name="Nomura N."/>
            <person name="Kikuchi H."/>
            <person name="Masuho Y."/>
            <person name="Yamashita R."/>
            <person name="Nakai K."/>
            <person name="Yada T."/>
            <person name="Nakamura Y."/>
            <person name="Ohara O."/>
            <person name="Isogai T."/>
            <person name="Sugano S."/>
        </authorList>
    </citation>
    <scope>NUCLEOTIDE SEQUENCE [LARGE SCALE MRNA] (ISOFORM 1)</scope>
    <source>
        <tissue>Placenta</tissue>
        <tissue>Skeletal muscle</tissue>
    </source>
</reference>
<reference key="9">
    <citation type="journal article" date="2003" name="Genome Res.">
        <title>The secreted protein discovery initiative (SPDI), a large-scale effort to identify novel human secreted and transmembrane proteins: a bioinformatics assessment.</title>
        <authorList>
            <person name="Clark H.F."/>
            <person name="Gurney A.L."/>
            <person name="Abaya E."/>
            <person name="Baker K."/>
            <person name="Baldwin D.T."/>
            <person name="Brush J."/>
            <person name="Chen J."/>
            <person name="Chow B."/>
            <person name="Chui C."/>
            <person name="Crowley C."/>
            <person name="Currell B."/>
            <person name="Deuel B."/>
            <person name="Dowd P."/>
            <person name="Eaton D."/>
            <person name="Foster J.S."/>
            <person name="Grimaldi C."/>
            <person name="Gu Q."/>
            <person name="Hass P.E."/>
            <person name="Heldens S."/>
            <person name="Huang A."/>
            <person name="Kim H.S."/>
            <person name="Klimowski L."/>
            <person name="Jin Y."/>
            <person name="Johnson S."/>
            <person name="Lee J."/>
            <person name="Lewis L."/>
            <person name="Liao D."/>
            <person name="Mark M.R."/>
            <person name="Robbie E."/>
            <person name="Sanchez C."/>
            <person name="Schoenfeld J."/>
            <person name="Seshagiri S."/>
            <person name="Simmons L."/>
            <person name="Singh J."/>
            <person name="Smith V."/>
            <person name="Stinson J."/>
            <person name="Vagts A."/>
            <person name="Vandlen R.L."/>
            <person name="Watanabe C."/>
            <person name="Wieand D."/>
            <person name="Woods K."/>
            <person name="Xie M.-H."/>
            <person name="Yansura D.G."/>
            <person name="Yi S."/>
            <person name="Yu G."/>
            <person name="Yuan J."/>
            <person name="Zhang M."/>
            <person name="Zhang Z."/>
            <person name="Goddard A.D."/>
            <person name="Wood W.I."/>
            <person name="Godowski P.J."/>
            <person name="Gray A.M."/>
        </authorList>
    </citation>
    <scope>NUCLEOTIDE SEQUENCE [LARGE SCALE MRNA] (ISOFORM 1)</scope>
</reference>
<reference key="10">
    <citation type="journal article" date="2003" name="Nature">
        <title>The DNA sequence and analysis of human chromosome 14.</title>
        <authorList>
            <person name="Heilig R."/>
            <person name="Eckenberg R."/>
            <person name="Petit J.-L."/>
            <person name="Fonknechten N."/>
            <person name="Da Silva C."/>
            <person name="Cattolico L."/>
            <person name="Levy M."/>
            <person name="Barbe V."/>
            <person name="De Berardinis V."/>
            <person name="Ureta-Vidal A."/>
            <person name="Pelletier E."/>
            <person name="Vico V."/>
            <person name="Anthouard V."/>
            <person name="Rowen L."/>
            <person name="Madan A."/>
            <person name="Qin S."/>
            <person name="Sun H."/>
            <person name="Du H."/>
            <person name="Pepin K."/>
            <person name="Artiguenave F."/>
            <person name="Robert C."/>
            <person name="Cruaud C."/>
            <person name="Bruels T."/>
            <person name="Jaillon O."/>
            <person name="Friedlander L."/>
            <person name="Samson G."/>
            <person name="Brottier P."/>
            <person name="Cure S."/>
            <person name="Segurens B."/>
            <person name="Aniere F."/>
            <person name="Samain S."/>
            <person name="Crespeau H."/>
            <person name="Abbasi N."/>
            <person name="Aiach N."/>
            <person name="Boscus D."/>
            <person name="Dickhoff R."/>
            <person name="Dors M."/>
            <person name="Dubois I."/>
            <person name="Friedman C."/>
            <person name="Gouyvenoux M."/>
            <person name="James R."/>
            <person name="Madan A."/>
            <person name="Mairey-Estrada B."/>
            <person name="Mangenot S."/>
            <person name="Martins N."/>
            <person name="Menard M."/>
            <person name="Oztas S."/>
            <person name="Ratcliffe A."/>
            <person name="Shaffer T."/>
            <person name="Trask B."/>
            <person name="Vacherie B."/>
            <person name="Bellemere C."/>
            <person name="Belser C."/>
            <person name="Besnard-Gonnet M."/>
            <person name="Bartol-Mavel D."/>
            <person name="Boutard M."/>
            <person name="Briez-Silla S."/>
            <person name="Combette S."/>
            <person name="Dufosse-Laurent V."/>
            <person name="Ferron C."/>
            <person name="Lechaplais C."/>
            <person name="Louesse C."/>
            <person name="Muselet D."/>
            <person name="Magdelenat G."/>
            <person name="Pateau E."/>
            <person name="Petit E."/>
            <person name="Sirvain-Trukniewicz P."/>
            <person name="Trybou A."/>
            <person name="Vega-Czarny N."/>
            <person name="Bataille E."/>
            <person name="Bluet E."/>
            <person name="Bordelais I."/>
            <person name="Dubois M."/>
            <person name="Dumont C."/>
            <person name="Guerin T."/>
            <person name="Haffray S."/>
            <person name="Hammadi R."/>
            <person name="Muanga J."/>
            <person name="Pellouin V."/>
            <person name="Robert D."/>
            <person name="Wunderle E."/>
            <person name="Gauguet G."/>
            <person name="Roy A."/>
            <person name="Sainte-Marthe L."/>
            <person name="Verdier J."/>
            <person name="Verdier-Discala C."/>
            <person name="Hillier L.W."/>
            <person name="Fulton L."/>
            <person name="McPherson J."/>
            <person name="Matsuda F."/>
            <person name="Wilson R."/>
            <person name="Scarpelli C."/>
            <person name="Gyapay G."/>
            <person name="Wincker P."/>
            <person name="Saurin W."/>
            <person name="Quetier F."/>
            <person name="Waterston R."/>
            <person name="Hood L."/>
            <person name="Weissenbach J."/>
        </authorList>
    </citation>
    <scope>NUCLEOTIDE SEQUENCE [LARGE SCALE GENOMIC DNA]</scope>
</reference>
<reference key="11">
    <citation type="journal article" date="2004" name="Genome Res.">
        <title>The status, quality, and expansion of the NIH full-length cDNA project: the Mammalian Gene Collection (MGC).</title>
        <authorList>
            <consortium name="The MGC Project Team"/>
        </authorList>
    </citation>
    <scope>NUCLEOTIDE SEQUENCE [LARGE SCALE MRNA] (ISOFORM 1)</scope>
    <source>
        <tissue>Lung</tissue>
    </source>
</reference>
<reference key="12">
    <citation type="journal article" date="2008" name="Proc. Natl. Acad. Sci. U.S.A.">
        <title>A quantitative atlas of mitotic phosphorylation.</title>
        <authorList>
            <person name="Dephoure N."/>
            <person name="Zhou C."/>
            <person name="Villen J."/>
            <person name="Beausoleil S.A."/>
            <person name="Bakalarski C.E."/>
            <person name="Elledge S.J."/>
            <person name="Gygi S.P."/>
        </authorList>
    </citation>
    <scope>PHOSPHORYLATION [LARGE SCALE ANALYSIS] AT SER-140 (ISOFORM 5)</scope>
    <scope>IDENTIFICATION BY MASS SPECTROMETRY [LARGE SCALE ANALYSIS]</scope>
    <source>
        <tissue>Cervix carcinoma</tissue>
    </source>
</reference>
<reference key="13">
    <citation type="journal article" date="2008" name="Arch. Biochem. Biophys.">
        <title>Characterization of human DHRS4: an inducible short-chain dehydrogenase/reductase enzyme with 3beta-hydroxysteroid dehydrogenase activity.</title>
        <authorList>
            <person name="Matsunaga T."/>
            <person name="Endo S."/>
            <person name="Maeda S."/>
            <person name="Ishikura S."/>
            <person name="Tajima K."/>
            <person name="Tanaka N."/>
            <person name="Nakamura K.T."/>
            <person name="Imamura Y."/>
            <person name="Hara A."/>
        </authorList>
    </citation>
    <scope>FUNCTION</scope>
    <scope>CATALYTIC ACTIVITY</scope>
    <scope>ACTIVITY REGULATION</scope>
    <scope>BIOPHYSICOCHEMICAL PROPERTIES</scope>
    <scope>SUBUNIT</scope>
    <scope>INDUCTION BY PPAR-ALPHA LIGANDS</scope>
    <scope>DOMAIN</scope>
    <scope>MUTAGENESIS OF THR-195</scope>
</reference>
<reference key="14">
    <citation type="journal article" date="2009" name="Arch. Biochem. Biophys.">
        <title>Molecular determinants for the stereospecific reduction of 3-ketosteroids and reactivity towards all-trans-retinal of a short-chain dehydrogenase/reductase (DHRS4).</title>
        <authorList>
            <person name="Endo S."/>
            <person name="Maeda S."/>
            <person name="Matsunaga T."/>
            <person name="Dhagat U."/>
            <person name="El-Kabbani O."/>
            <person name="Tanaka N."/>
            <person name="Nakamura K.T."/>
            <person name="Tajima K."/>
            <person name="Hara A."/>
        </authorList>
    </citation>
    <scope>FUNCTION</scope>
    <scope>CATALYTIC ACTIVITY</scope>
    <scope>BIOPHYSICOCHEMICAL PROPERTIES</scope>
    <scope>DOMAIN</scope>
    <scope>MUTAGENESIS OF SER-176; PHE-179 AND THR-195</scope>
</reference>
<reference key="15">
    <citation type="journal article" date="2009" name="Chem. Biol. Interact.">
        <title>The SDR (short-chain dehydrogenase/reductase and related enzymes) nomenclature initiative.</title>
        <authorList>
            <person name="Persson B."/>
            <person name="Kallberg Y."/>
            <person name="Bray J.E."/>
            <person name="Bruford E."/>
            <person name="Dellaporta S.L."/>
            <person name="Favia A.D."/>
            <person name="Duarte R.G."/>
            <person name="Joernvall H."/>
            <person name="Kavanagh K.L."/>
            <person name="Kedishvili N."/>
            <person name="Kisiela M."/>
            <person name="Maser E."/>
            <person name="Mindnich R."/>
            <person name="Orchard S."/>
            <person name="Penning T.M."/>
            <person name="Thornton J.M."/>
            <person name="Adamski J."/>
            <person name="Oppermann U."/>
        </authorList>
    </citation>
    <scope>GENE FAMILY</scope>
    <scope>NOMENCLATURE</scope>
</reference>
<reference key="16">
    <citation type="journal article" date="2011" name="BMC Syst. Biol.">
        <title>Initial characterization of the human central proteome.</title>
        <authorList>
            <person name="Burkard T.R."/>
            <person name="Planyavsky M."/>
            <person name="Kaupe I."/>
            <person name="Breitwieser F.P."/>
            <person name="Buerckstuemmer T."/>
            <person name="Bennett K.L."/>
            <person name="Superti-Furga G."/>
            <person name="Colinge J."/>
        </authorList>
    </citation>
    <scope>IDENTIFICATION BY MASS SPECTROMETRY [LARGE SCALE ANALYSIS]</scope>
</reference>
<reference key="17">
    <citation type="journal article" date="2012" name="Cell. Physiol. Biochem.">
        <title>Human NRDRB1, an alternatively spliced isoform of NADP(H)-dependent retinol dehydrogenase/reductase enhanced enzymatic activity of Benzil.</title>
        <authorList>
            <person name="Yan Y."/>
            <person name="Song X."/>
            <person name="Liu G."/>
            <person name="Su Z."/>
            <person name="Du Y."/>
            <person name="Sui X."/>
            <person name="Chang X."/>
            <person name="Huang D."/>
        </authorList>
    </citation>
    <scope>ALTERNATIVE SPLICING (ISOFORM 8)</scope>
    <scope>CATALYTIC ACTIVITY</scope>
    <scope>BIOPHYSICOCHEMICAL PROPERTIES</scope>
</reference>
<reference key="18">
    <citation type="journal article" date="2012" name="Gene">
        <title>Identification of a novel isoform of DHRS4 protein with a nuclear localization signal.</title>
        <authorList>
            <person name="Su Z."/>
            <person name="Li R."/>
            <person name="Song X."/>
            <person name="Liu G."/>
            <person name="Li Y."/>
            <person name="Chang X."/>
            <person name="Li C."/>
            <person name="Huang D."/>
        </authorList>
    </citation>
    <scope>SUBCELLULAR LOCATION (ISOFORM 7)</scope>
    <scope>FUNCTION</scope>
</reference>
<reference key="19">
    <citation type="journal article" date="2014" name="J. Proteomics">
        <title>An enzyme assisted RP-RPLC approach for in-depth analysis of human liver phosphoproteome.</title>
        <authorList>
            <person name="Bian Y."/>
            <person name="Song C."/>
            <person name="Cheng K."/>
            <person name="Dong M."/>
            <person name="Wang F."/>
            <person name="Huang J."/>
            <person name="Sun D."/>
            <person name="Wang L."/>
            <person name="Ye M."/>
            <person name="Zou H."/>
        </authorList>
    </citation>
    <scope>IDENTIFICATION BY MASS SPECTROMETRY [LARGE SCALE ANALYSIS]</scope>
    <source>
        <tissue>Liver</tissue>
    </source>
</reference>
<reference key="20">
    <citation type="journal article" date="2015" name="Proteomics">
        <title>N-terminome analysis of the human mitochondrial proteome.</title>
        <authorList>
            <person name="Vaca Jacome A.S."/>
            <person name="Rabilloud T."/>
            <person name="Schaeffer-Reiss C."/>
            <person name="Rompais M."/>
            <person name="Ayoub D."/>
            <person name="Lane L."/>
            <person name="Bairoch A."/>
            <person name="Van Dorsselaer A."/>
            <person name="Carapito C."/>
        </authorList>
    </citation>
    <scope>IDENTIFICATION BY MASS SPECTROMETRY [LARGE SCALE ANALYSIS]</scope>
</reference>
<reference key="21">
    <citation type="journal article" date="2016" name="Genet. Mol. Res.">
        <title>CpG island evolution in the mammalian DHRS4 gene cluster and its role in the regulation of gene transcription.</title>
        <authorList>
            <person name="Su Z."/>
            <person name="Liu G."/>
            <person name="Song X."/>
            <person name="Liang B."/>
            <person name="Chang X."/>
            <person name="Huang D."/>
        </authorList>
    </citation>
    <scope>MISCELLANEOUS</scope>
</reference>
<comment type="function">
    <text evidence="7 8">NADPH-dependent oxidoreductase which catalyzes the reduction of a variety of compounds bearing carbonyl groups including ketosteroids, alpha-dicarbonyl compounds, aldehydes, aromatic ketones and quinones (PubMed:18571493, PubMed:19056333). Reduces 3-ketosteroids and benzil into 3beta-hydroxysteroids and R-benzoin, respectively, in contrast to the stereoselectivity of non-primate DHRS4s which produce 3alpha-hydroxysteroids and S-benzoin (PubMed:19056333). Diplays low activity toward all-trans-retinal and no activity toward 9-cis-retinal as compared to non-primate mammals (PubMed:18571493, PubMed:19056333). In the reverse reaction, catalyze the NAD-dependent oxidation of 3beta-hydroxysteroids and alcohol, but with much lower efficiency (PubMed:18571493, PubMed:19056333). Involved in the metabolism of 3beta-hydroxysteroids, isatin and xenobiotic carbonyl compounds (PubMed:18571493, PubMed:19056333).</text>
</comment>
<comment type="function">
    <molecule>Isoform 7</molecule>
    <text evidence="9">No detected catalytic activity in vitro, possibly due to the lack of catalytic site.</text>
</comment>
<comment type="function">
    <molecule>Isoform 8</molecule>
    <text evidence="10">NADPH-dependent oxidoreductase which catalyzes the reduction of a variety of compounds bearing carbonyl groups including ketosteroids, alpha-dicarbonyl compounds, aldehydes, aromatic ketones and quinones. Involved in the metabolism of 3beta-hydroxysteroids, isatin and xenobiotic carbonyl compounds. Has a higher catalytic activity for xenobiotic alpha-dicarbonyl compounds, sucha as benzil, than isoform 1 and is involved in benzil detoxification.</text>
</comment>
<comment type="catalytic activity">
    <reaction evidence="7 8 10">
        <text>a secondary alcohol + NADP(+) = a ketone + NADPH + H(+)</text>
        <dbReference type="Rhea" id="RHEA:19257"/>
        <dbReference type="ChEBI" id="CHEBI:15378"/>
        <dbReference type="ChEBI" id="CHEBI:17087"/>
        <dbReference type="ChEBI" id="CHEBI:35681"/>
        <dbReference type="ChEBI" id="CHEBI:57783"/>
        <dbReference type="ChEBI" id="CHEBI:58349"/>
        <dbReference type="EC" id="1.1.1.184"/>
    </reaction>
    <physiologicalReaction direction="right-to-left" evidence="19 20 21">
        <dbReference type="Rhea" id="RHEA:19259"/>
    </physiologicalReaction>
</comment>
<comment type="catalytic activity">
    <molecule>Isoform 8</molecule>
    <reaction evidence="10">
        <text>a secondary alcohol + NADP(+) = a ketone + NADPH + H(+)</text>
        <dbReference type="Rhea" id="RHEA:19257"/>
        <dbReference type="ChEBI" id="CHEBI:15378"/>
        <dbReference type="ChEBI" id="CHEBI:17087"/>
        <dbReference type="ChEBI" id="CHEBI:35681"/>
        <dbReference type="ChEBI" id="CHEBI:57783"/>
        <dbReference type="ChEBI" id="CHEBI:58349"/>
        <dbReference type="EC" id="1.1.1.184"/>
    </reaction>
    <physiologicalReaction direction="right-to-left" evidence="21">
        <dbReference type="Rhea" id="RHEA:19259"/>
    </physiologicalReaction>
</comment>
<comment type="catalytic activity">
    <reaction evidence="7 8 10">
        <text>3beta-hydroxy-5beta-pregnane-20-one + NADP(+) = 5beta-pregnan-3,20-dione + NADPH + H(+)</text>
        <dbReference type="Rhea" id="RHEA:22944"/>
        <dbReference type="ChEBI" id="CHEBI:15378"/>
        <dbReference type="ChEBI" id="CHEBI:16229"/>
        <dbReference type="ChEBI" id="CHEBI:30154"/>
        <dbReference type="ChEBI" id="CHEBI:57783"/>
        <dbReference type="ChEBI" id="CHEBI:58349"/>
    </reaction>
    <physiologicalReaction direction="right-to-left" evidence="7 20">
        <dbReference type="Rhea" id="RHEA:22946"/>
    </physiologicalReaction>
</comment>
<comment type="catalytic activity">
    <molecule>Isoform 8</molecule>
    <reaction evidence="10">
        <text>3beta-hydroxy-5beta-pregnane-20-one + NADP(+) = 5beta-pregnan-3,20-dione + NADPH + H(+)</text>
        <dbReference type="Rhea" id="RHEA:22944"/>
        <dbReference type="ChEBI" id="CHEBI:15378"/>
        <dbReference type="ChEBI" id="CHEBI:16229"/>
        <dbReference type="ChEBI" id="CHEBI:30154"/>
        <dbReference type="ChEBI" id="CHEBI:57783"/>
        <dbReference type="ChEBI" id="CHEBI:58349"/>
    </reaction>
    <physiologicalReaction direction="right-to-left" evidence="21">
        <dbReference type="Rhea" id="RHEA:22946"/>
    </physiologicalReaction>
</comment>
<comment type="catalytic activity">
    <reaction evidence="7 8">
        <text>5beta-dihydrotestosterone + NADPH + H(+) = 5beta-androstane-3beta,17beta-diol + NADP(+)</text>
        <dbReference type="Rhea" id="RHEA:69012"/>
        <dbReference type="ChEBI" id="CHEBI:2150"/>
        <dbReference type="ChEBI" id="CHEBI:15378"/>
        <dbReference type="ChEBI" id="CHEBI:36715"/>
        <dbReference type="ChEBI" id="CHEBI:57783"/>
        <dbReference type="ChEBI" id="CHEBI:58349"/>
    </reaction>
    <physiologicalReaction direction="left-to-right" evidence="7 20">
        <dbReference type="Rhea" id="RHEA:69013"/>
    </physiologicalReaction>
</comment>
<comment type="catalytic activity">
    <reaction evidence="7">
        <text>5beta-androstane-3,17-dione + NADPH + H(+) = 3beta-hydroxy-5beta-androstane-17-one + NADP(+)</text>
        <dbReference type="Rhea" id="RHEA:69036"/>
        <dbReference type="ChEBI" id="CHEBI:15378"/>
        <dbReference type="ChEBI" id="CHEBI:16985"/>
        <dbReference type="ChEBI" id="CHEBI:57783"/>
        <dbReference type="ChEBI" id="CHEBI:58349"/>
        <dbReference type="ChEBI" id="CHEBI:89524"/>
    </reaction>
    <physiologicalReaction direction="left-to-right" evidence="7">
        <dbReference type="Rhea" id="RHEA:69037"/>
    </physiologicalReaction>
</comment>
<comment type="catalytic activity">
    <reaction evidence="10 20">
        <text>isatin + NADPH + H(+) = 3-hydroxyindolin-2-one + NADP(+)</text>
        <dbReference type="Rhea" id="RHEA:68608"/>
        <dbReference type="ChEBI" id="CHEBI:15378"/>
        <dbReference type="ChEBI" id="CHEBI:27539"/>
        <dbReference type="ChEBI" id="CHEBI:28536"/>
        <dbReference type="ChEBI" id="CHEBI:57783"/>
        <dbReference type="ChEBI" id="CHEBI:58349"/>
    </reaction>
    <physiologicalReaction direction="left-to-right" evidence="20 21">
        <dbReference type="Rhea" id="RHEA:68609"/>
    </physiologicalReaction>
</comment>
<comment type="catalytic activity">
    <molecule>Isoform 8</molecule>
    <reaction evidence="10">
        <text>isatin + NADPH + H(+) = 3-hydroxyindolin-2-one + NADP(+)</text>
        <dbReference type="Rhea" id="RHEA:68608"/>
        <dbReference type="ChEBI" id="CHEBI:15378"/>
        <dbReference type="ChEBI" id="CHEBI:27539"/>
        <dbReference type="ChEBI" id="CHEBI:28536"/>
        <dbReference type="ChEBI" id="CHEBI:57783"/>
        <dbReference type="ChEBI" id="CHEBI:58349"/>
    </reaction>
    <physiologicalReaction direction="left-to-right" evidence="21">
        <dbReference type="Rhea" id="RHEA:68609"/>
    </physiologicalReaction>
</comment>
<comment type="catalytic activity">
    <reaction evidence="7">
        <text>lithocholate + NADP(+) = 3-oxo-5beta-cholan-24-oate + NADPH + H(+)</text>
        <dbReference type="Rhea" id="RHEA:47496"/>
        <dbReference type="ChEBI" id="CHEBI:11867"/>
        <dbReference type="ChEBI" id="CHEBI:15378"/>
        <dbReference type="ChEBI" id="CHEBI:29744"/>
        <dbReference type="ChEBI" id="CHEBI:57783"/>
        <dbReference type="ChEBI" id="CHEBI:58349"/>
    </reaction>
    <physiologicalReaction direction="right-to-left" evidence="19">
        <dbReference type="Rhea" id="RHEA:47498"/>
    </physiologicalReaction>
</comment>
<comment type="catalytic activity">
    <reaction evidence="7">
        <text>3-oxo-5beta-cholan-24-oate + NADPH + H(+) = isolithocholate + NADP(+)</text>
        <dbReference type="Rhea" id="RHEA:47520"/>
        <dbReference type="ChEBI" id="CHEBI:11867"/>
        <dbReference type="ChEBI" id="CHEBI:15378"/>
        <dbReference type="ChEBI" id="CHEBI:57783"/>
        <dbReference type="ChEBI" id="CHEBI:58349"/>
        <dbReference type="ChEBI" id="CHEBI:87728"/>
    </reaction>
    <physiologicalReaction direction="left-to-right" evidence="19">
        <dbReference type="Rhea" id="RHEA:47521"/>
    </physiologicalReaction>
</comment>
<comment type="activity regulation">
    <text evidence="7">Inhibited by flavonoids (quercetin and genistein), cetylpyridium chloride, phenylhexane and valproic acid. Low inhibition is observed with fatty acids (myristic acid and lauric acid). No significant inhibition is observed with barbital, dicumarol, indomethacin, metyrapone, ethacrynic acid, disulfiram, hexestrol and benzodiazepines (diazepam and nitrazepam).</text>
</comment>
<comment type="biophysicochemical properties">
    <molecule>Isoform 8</molecule>
    <kinetics>
        <KM evidence="10">5.1 uM for 5beta-Pregnane-3,20-dione(at pH7.4)</KM>
        <KM evidence="10">127.8 uM for 5beta-Androstan-17b-ol-3-one (at pH7.4)</KM>
        <KM evidence="7">475 uM for Isatin (at pH6)</KM>
        <KM evidence="10">1.8 uM for Benzil (at pH6)</KM>
        <KM evidence="10">18.8 uM for 1-Phenylisatin (at pH6)</KM>
        <KM evidence="10">2.2 uM for 9,10-Phenanthrenequinone (at pH7.4)</KM>
        <KM evidence="10">7.5 uM for Menadione (at pH6)</KM>
        <text evidence="10">kcat is 3.4 min(-1) with 5beta-Pregnane-3,20-dione as substrate (at pH7.4) (PubMed:23128527). kcat is 11.8 min(-1) with 5beta-Androstan-17beta-ol-3-one as substrate (at pH7.4) (PubMed:23128527). kcat is 475 min(-1) with Isatin as substrate (at pH6) (PubMed:23128527). kcat is 3600 min(-1) with Benzil as substrate (at pH6) (PubMed:23128527). kcat is 2570 min(-1) with 1-Phenylisatin as substrate (at pH6) (PubMed:23128527). kcat is 737 min(-1) with 9,10-Phenanthrenequinone as substrate (at pH7.4) (PubMed:23128527). kcat is 27.1 min(-1) with Menadione as substrate (at pH6) (PubMed:23128527).</text>
    </kinetics>
</comment>
<comment type="biophysicochemical properties">
    <kinetics>
        <KM evidence="7">0.0029 mM for 5beta-Pregnane-3,20-dione(at pH7.4)</KM>
        <KM evidence="10">4.6 uM for 5beta-Pregnane-3,20-dione(at pH7.4)</KM>
        <KM evidence="7">0.0049 mM for 5beta-Androstan-17b-ol-3-one (at pH7.4)</KM>
        <KM evidence="10">117 uM for 5beta-Androstan-17b-ol-3-one (at pH7.4)</KM>
        <KM evidence="7">0.01 mM for 5beta-Androstane-3,17-dione (at pH7.4)</KM>
        <KM evidence="7">0.0097 mM for 5beta-Pregnan-20alpha-ol-3-one (at pH7.4)</KM>
        <KM evidence="7">0.016 mM for 5alpha-Dihydrotestosterone (at pH7.4)</KM>
        <KM evidence="7">0.028 mM for 5alpha-Androstane-3,17-dione (at pH7.4)</KM>
        <KM evidence="7">0.035 mM for Dehydrolithocholic acid (at pH7.4)</KM>
        <KM evidence="7">0.024 mM for all-trans-Retinal (at pH7.4)</KM>
        <KM evidence="7">0.32 mM for Isatin (at pH6)</KM>
        <KM evidence="7">389 uM for Isatin (at pH6)</KM>
        <KM evidence="7">1.4 mM for Dimethyl-2-oxoglutarate (at pH6)</KM>
        <KM evidence="7">0.16 mM for 4-Hexanoylpyridine (at pH6)</KM>
        <KM evidence="7">0.036 mM for Hexanophenone (at pH6)</KM>
        <KM evidence="7">0.054 mM for Valerophenone (at pH6)</KM>
        <KM evidence="7">0.048 mM for n-Butyrophenone (at pH6)</KM>
        <KM evidence="7">1 mM for 4-Benzoylpyridine (at pH6)</KM>
        <KM evidence="7">0.55 mM for 3,4-hexanedione (at pH6)</KM>
        <KM evidence="7">0.2 mM for 2,3-heptanedione (at pH6)</KM>
        <KM evidence="7">0.005 mM for Benzil (at pH6)</KM>
        <KM evidence="10">7.1 uM for Benzil (at pH6)</KM>
        <KM evidence="7">0.0015 mM for 4,4'-Dimethylbenzil (at pH6)</KM>
        <KM evidence="7">10 mM for 2,3-Pentanedione (at pH6)</KM>
        <KM evidence="7">54 mM for Diacetyl (at pH6)</KM>
        <KM evidence="7">13 mM for 4-Nitrobenzaldehyde (at pH6)</KM>
        <KM evidence="7">21 mM for Pyridine-4-aldehyde (at pH6)</KM>
        <KM evidence="7">0.0052 mM for 1-Phenylisatin (at pH6)</KM>
        <KM evidence="10">12.8 uM for 1-Phenylisatin (at pH6)</KM>
        <KM evidence="7">0.0036 mM for 9,10-Phenanthrenequinone (at pH7.4)</KM>
        <KM evidence="10">3.4 uM for 9,10-Phenanthrenequinone (at pH7.4)</KM>
        <KM evidence="7">0.18 mM for Menadione (at pH6)</KM>
        <KM evidence="10">29.7 uM for Menadione (at pH6)</KM>
        <KM evidence="7">0.12 mM for 6-tert-butyl-2,3-epoxy-5-cyclohexene-1,4-dione (at pH6)</KM>
        <KM evidence="7">0.089 mM for 1,4-Naphthoquinone (at pH6)</KM>
        <KM evidence="7">0.008 mM for 5b-Pregnan-3b-ol-20-one (at pH7.4)</KM>
        <KM evidence="7">0.0041 mM for 5b-Androstane-3b,17b-diol (at pH7.4)</KM>
        <KM evidence="7">0.0079 mM for 5b-Androstan-3b-ol-17-one (at pH7.4)</KM>
        <KM evidence="7">0.008 mM for 5b-Pregnane-3b,20a-diol (at pH7.4)</KM>
        <KM evidence="7">0.0084 mM for S-Phenyl-1-butanol (at pH7.4)</KM>
        <KM evidence="7">0.093 mM for S-1-Tetralol (at pH7.4)</KM>
        <KM evidence="7">0.24 mM for S-1-Indanol (at pH7.4)</KM>
        <text evidence="7 8">kcat is 3.8 min(-1) with 5beta-Pregnane-3,20-dione as substrate (at pH7.4) (PubMed:18571493). kcat is 5 min(-1) with 5beta-Androstan-17beta-ol-3-one as substrate (at pH7.4) (PubMed:18571493). kcat is 4.6 min(-1) with 5beta-Androstane-3,17-dione as substrate (at pH7.4) (PubMed:18571493). kcat is 4.2 min(-1) with 5b-Pregnan-20alpha-ol-3-one as substrate (at pH7.4) (PubMed:18571493). kcat is 5.7 min(-1) with 5alpha-Dihydrotestosterone as substrate (at pH7.4) (PubMed:18571493). kcat 5.8 is min(-1) with 5alpha-Androstane-3,17-dione as substrate (at pH7.4) (PubMed:18571493). kcat is 0.41 min(-1) with Testosterone as substrate (at pH7.4) (PubMed:18571493). kcat is 0.02 min(-1) with 5alpha-Pregnane-3,20-dione as substrate (at pH7.4) (PubMed:18571493). kcat is 2.6 min(-1) with Dehydrolithocholic acid as substrate (at pH7.4) (PubMed:18571493). kcat is 3.2 min(-1) with all-trans-Retinal as substrate (at pH7.4) (PubMed:18571493). kcat is 1900 min(-1) with Isatin as substrate (at pH6) (PubMed:18571493). kcat is 2000 min(-1) with Dimethyl-2-oxoglutarate as substrate (at pH6) (PubMed:18571493). kcat is 2000 min(-1) with 4-Hexanoylpyridine as substrate (at pH6) (PubMed:18571493). kcat is 160 min(-1) with Hexanophenone as substrate (at pH6) (PubMed:18571493). kcat is 120 min(-1) with Valerophenone as substrate (at pH6) (PubMed:18571493). kcat is 51 min(-1) with n-Butyrophenone as substrate (at pH6) (PubMed:18571493). kcat is 120 min(-1) with 4-Benzoylpyridine as substrate (at pH6) (PubMed:18571493). kcat is 980 min(-1) with 3,4-Hexanedione as substrate (at pH6) (PubMed:18571493). kcat is 2410 min(-1) with 2,3-Heptanedione as substrate (at pH6) (PubMed:18571493). kcat is 1900 min(-1) with Benzil as substrate (at pH6) (PubMed:18571493). kcat is 220 min(-1) with 4,4'-Dimethylbenzil as substrate (at pH6) (PubMed:18571493). kcat is 1600 min(-1) with 2,3-Pentanedione as substrate (at pH6) (PubMed:18571493). kcat is 1700 min(-1) with Diacetyl as substrate (at pH6) (PubMed:18571493). kcat is 1000 min(-1) with 4-Nitrobenzaldehyde as substrate (at pH6) (PubMed:18571493). kcat is 280 min(-1) with Pyridine-4-aldehyde as substrate (at pH6) (PubMed:18571493). kcat is 2500 min(-1) with 1-Phenylisatin as substrate (at pH6) (PubMed:18571493). kcat is 710 min(-1) with 9,10-Phenanthrenequinone as substrate (at pH6) (PubMed:18571493). kcat is 39 min(-1) with Menadione as substrate (at pH6) (PubMed:18571493). kcat is 120 min(-1) with 6-tert-butyl-2,3-epoxy-5-cyclohexene-1,4-dione as substrate (at pH6) (PubMed:18571493). kcat is 53 min(-1) with 1,4-Naphthoquinone as substrate (at pH6) (PubMed:18571493). kcat is 2.5 min(-1) with 5beta-Pregnan-3beta-ol-20-one as substrate (at pH6) (PubMed:18571493). kcat is 0.42 min(-1) with 5beta-Pregnan-3beta-ol-20-one as substrate (at pH6) (PubMed:19056333). kcat is 1 min(-1) with 5beta-Androstane-3beta,17beta-diol as substrate (at pH6) (PubMed:18571493). kcat is 0.24 min(-1) with 5beta-Androstane-3beta,17beta-diol as substrate (at pH6) (PubMed:19056333). kcat is 1 min(-1) with 5beta-Androstan-3beta-ol-17-one as substrate (at pH7.4) (PubMed:18571493). kcat is 0.84 min(-1) with 5beta-Pregnane-3beta,20alpha-diol as substrate (at pH7.4) (PubMed:18571493). kcat is 0.86 min(-1) with 5alpha-Androstane-3beta,17beta-diol as substrate (at pH7.4) (PubMed:18571493). kcat is 0.43 min(-1) with 5alpha-Pregnane-3beta-ol-20-one as substrate (at pH7.4) (PubMed:18571493). kcat is 0.21 min(-1) with Isolithocholic acid as substrate (at pH7.4) (PubMed:18571493). kcat is 0.21 min(-1) with Isolithocholic acid as substrate (at pH7.4) (PubMed:19056333). kcat is 0.02 min(-1) with 5alpha-Androstan-3beta-ol-17-one as substrate (at pH7.4) (PubMed:18571493). kcat is 4.5 min(-1) with S-Phenyl-1-butanol as substrate (at pH7.4) (PubMed:18571493). kcat is 15 min(-1) with S-1-Tetralol as substrate (at pH7.4) (PubMed:18571493). kcat is 11 min(-1) with S-1-Indanol as substrate (at pH7.4) (PubMed:18571493). kcat is 0.2 min(-1) with all-trans-Retinol as substrate (at pH7.4) (PubMed:18571493).</text>
    </kinetics>
</comment>
<comment type="subunit">
    <text evidence="7">Homotetramer.</text>
</comment>
<comment type="subcellular location">
    <molecule>Isoform 1</molecule>
    <subcellularLocation>
        <location evidence="5 6">Peroxisome</location>
    </subcellularLocation>
    <text evidence="6">Isoform 4 is not peroxisomal.</text>
</comment>
<comment type="subcellular location">
    <molecule>Isoform 7</molecule>
    <subcellularLocation>
        <location evidence="9">Nucleus</location>
    </subcellularLocation>
</comment>
<comment type="alternative products">
    <event type="alternative splicing"/>
    <isoform>
        <id>Q9BTZ2-1</id>
        <name>1</name>
        <name>SDR-SRL3</name>
        <sequence type="displayed"/>
    </isoform>
    <isoform>
        <id>Q9BTZ2-2</id>
        <name>2</name>
        <name>SDR-SRL1</name>
        <sequence type="described" ref="VSP_008586"/>
    </isoform>
    <isoform>
        <id>Q9BTZ2-3</id>
        <name>3</name>
        <name>SDR-SRL2</name>
        <sequence type="described" ref="VSP_008585"/>
    </isoform>
    <isoform>
        <id>Q9BTZ2-4</id>
        <name>4</name>
        <name>NRDRB1</name>
        <sequence type="described" ref="VSP_031436"/>
    </isoform>
    <isoform>
        <id>Q9BTZ2-5</id>
        <name>5</name>
        <name>NRDRB2</name>
        <sequence type="described" ref="VSP_031436 VSP_031438"/>
    </isoform>
    <isoform>
        <id>Q9BTZ2-6</id>
        <name>6</name>
        <name>NRDRA1</name>
        <sequence type="described" ref="VSP_031435"/>
    </isoform>
    <isoform>
        <id>Q9BTZ2-7</id>
        <name>7</name>
        <name>NRDRA2</name>
        <sequence type="described" ref="VSP_031437 VSP_031439"/>
    </isoform>
    <isoform>
        <id>Q9BTZ2-8</id>
        <name>8</name>
        <name evidence="16">NRDRB1</name>
        <sequence type="described" ref="VSP_044947 VSP_031436"/>
    </isoform>
</comment>
<comment type="tissue specificity">
    <molecule>Isoform 1</molecule>
    <text evidence="6">Predominantly expressed in normal cervix (at protein level).</text>
</comment>
<comment type="tissue specificity">
    <molecule>Isoform 4</molecule>
    <text evidence="6">Expressed in some neoplastic cervical tissues, but not in normal cervix (at protein level).</text>
</comment>
<comment type="tissue specificity">
    <molecule>Isoform 5</molecule>
    <text evidence="6">Expressed in a few neoplastic cervical tissues.</text>
</comment>
<comment type="tissue specificity">
    <molecule>Isoform 6</molecule>
    <text evidence="6">Expressed in a few neoplastic cervical tissues.</text>
</comment>
<comment type="tissue specificity">
    <molecule>Isoform 8</molecule>
    <text evidence="10">High expression in liver.</text>
</comment>
<comment type="induction">
    <text evidence="7">Induced by PPARA ligands clofibrate and Wy14,643.</text>
</comment>
<comment type="domain">
    <text evidence="1">The C-terminus peroxisomal targeting signal tripeptide is important for peroxisomal import. Once in the peroxisome, it is involved in intersubunit interactions.</text>
</comment>
<comment type="domain">
    <text evidence="7 8">Three specific residues, Ser-176, Phe-179 and Thr-195 are conserved between primates whereas the respective residues are phenylalanine, leucine, and asparagine in the other mammal enzymes (PubMed:18571493, PubMed:19056333). The two residues at positions 176 and 179 are molecular determinants responsible for the stereoselective reduction of 3-ketosteroids and benzil (PubMed:19056333). The presence of an asparagine at position 195 is important for the maintenance of the quaternary structure and stability at cold temperature (PubMed:18571493, PubMed:19056333). The absence of an asparagine at position 195 destabilizes the quaternary structure, thereby affecting catalytic efficiency toward some substrates and decreasing stability at cold temperature (PubMed:18571493, PubMed:19056333).</text>
</comment>
<comment type="miscellaneous">
    <text evidence="7 8 11">Primate DHRS4s display different stereoselectivity and catalytic efficiency in the oxidoreduction of some substrates as compared to other mammal DHRS4s due to a difference in conserved amino acid residues (PubMed:18571493, PubMed:19056333). Three homologous proteins DHRS4, DHRS4L1, and DHRS4L2 are derived from gene duplication of DHRS4, and the gene cluster is arranged in tandem in chromosome 14 (PubMed:27323117).</text>
</comment>
<comment type="similarity">
    <text evidence="18">Belongs to the short-chain dehydrogenases/reductases (SDR) family.</text>
</comment>
<comment type="sequence caution" evidence="18">
    <conflict type="erroneous initiation">
        <sequence resource="EMBL-CDS" id="AAD02292"/>
    </conflict>
    <text>Truncated N-terminus.</text>
</comment>
<comment type="sequence caution" evidence="18">
    <conflict type="erroneous initiation">
        <sequence resource="EMBL-CDS" id="AAL61824"/>
    </conflict>
    <text>Truncated N-terminus.</text>
</comment>
<comment type="sequence caution" evidence="18">
    <conflict type="erroneous initiation">
        <sequence resource="EMBL-CDS" id="BAB18775"/>
    </conflict>
    <text>Truncated N-terminus.</text>
</comment>
<comment type="sequence caution" evidence="18">
    <conflict type="erroneous initiation">
        <sequence resource="EMBL-CDS" id="BAG37057"/>
    </conflict>
    <text>Truncated N-terminus.</text>
</comment>
<name>DHRS4_HUMAN</name>
<accession>Q9BTZ2</accession>
<accession>B2RB10</accession>
<accession>B7WNS9</accession>
<accession>D3YTB8</accession>
<accession>E2QRL8</accession>
<accession>O95162</accession>
<accession>Q20CR0</accession>
<accession>Q2LC19</accession>
<accession>Q2LE81</accession>
<accession>Q58IU4</accession>
<accession>Q6E0Y1</accession>
<accession>Q6UWU3</accession>
<accession>Q71UQ6</accession>
<accession>Q8TD03</accession>
<accession>Q9H3N5</accession>
<accession>Q9NV08</accession>
<dbReference type="EC" id="1.1.1.184" evidence="7 8 10"/>
<dbReference type="EMBL" id="AF044127">
    <property type="protein sequence ID" value="AAD02292.1"/>
    <property type="status" value="ALT_INIT"/>
    <property type="molecule type" value="mRNA"/>
</dbReference>
<dbReference type="EMBL" id="AB045131">
    <property type="protein sequence ID" value="BAB18775.1"/>
    <property type="status" value="ALT_INIT"/>
    <property type="molecule type" value="mRNA"/>
</dbReference>
<dbReference type="EMBL" id="AY071856">
    <property type="protein sequence ID" value="AAL61824.2"/>
    <property type="status" value="ALT_INIT"/>
    <property type="molecule type" value="mRNA"/>
</dbReference>
<dbReference type="EMBL" id="AF064256">
    <property type="protein sequence ID" value="AAQ13444.1"/>
    <property type="molecule type" value="mRNA"/>
</dbReference>
<dbReference type="EMBL" id="AY616182">
    <property type="protein sequence ID" value="AAT70757.1"/>
    <property type="molecule type" value="mRNA"/>
</dbReference>
<dbReference type="EMBL" id="DQ344810">
    <property type="protein sequence ID" value="ABD75823.1"/>
    <property type="molecule type" value="mRNA"/>
</dbReference>
<dbReference type="EMBL" id="AY943857">
    <property type="protein sequence ID" value="AAX49568.1"/>
    <property type="molecule type" value="mRNA"/>
</dbReference>
<dbReference type="EMBL" id="DQ325464">
    <property type="protein sequence ID" value="ABC61320.1"/>
    <property type="molecule type" value="mRNA"/>
</dbReference>
<dbReference type="EMBL" id="DQ338571">
    <property type="protein sequence ID" value="ABC61321.1"/>
    <property type="molecule type" value="mRNA"/>
</dbReference>
<dbReference type="EMBL" id="AK001870">
    <property type="protein sequence ID" value="BAA91953.1"/>
    <property type="molecule type" value="mRNA"/>
</dbReference>
<dbReference type="EMBL" id="AK314448">
    <property type="protein sequence ID" value="BAG37057.1"/>
    <property type="status" value="ALT_INIT"/>
    <property type="molecule type" value="mRNA"/>
</dbReference>
<dbReference type="EMBL" id="AY358638">
    <property type="protein sequence ID" value="AAQ89001.1"/>
    <property type="molecule type" value="mRNA"/>
</dbReference>
<dbReference type="EMBL" id="AL136419">
    <property type="status" value="NOT_ANNOTATED_CDS"/>
    <property type="molecule type" value="Genomic_DNA"/>
</dbReference>
<dbReference type="EMBL" id="BC003019">
    <property type="protein sequence ID" value="AAH03019.1"/>
    <property type="molecule type" value="mRNA"/>
</dbReference>
<dbReference type="CCDS" id="CCDS61408.1">
    <molecule id="Q9BTZ2-7"/>
</dbReference>
<dbReference type="CCDS" id="CCDS61409.1">
    <molecule id="Q9BTZ2-2"/>
</dbReference>
<dbReference type="CCDS" id="CCDS61410.1">
    <molecule id="Q9BTZ2-4"/>
</dbReference>
<dbReference type="CCDS" id="CCDS61411.1">
    <molecule id="Q9BTZ2-5"/>
</dbReference>
<dbReference type="CCDS" id="CCDS61412.1">
    <molecule id="Q9BTZ2-3"/>
</dbReference>
<dbReference type="CCDS" id="CCDS9605.1">
    <molecule id="Q9BTZ2-1"/>
</dbReference>
<dbReference type="RefSeq" id="NP_001269916.1">
    <molecule id="Q9BTZ2-7"/>
    <property type="nucleotide sequence ID" value="NM_001282987.2"/>
</dbReference>
<dbReference type="RefSeq" id="NP_001269917.1">
    <molecule id="Q9BTZ2-4"/>
    <property type="nucleotide sequence ID" value="NM_001282988.2"/>
</dbReference>
<dbReference type="RefSeq" id="NP_001269918.1">
    <molecule id="Q9BTZ2-2"/>
    <property type="nucleotide sequence ID" value="NM_001282989.2"/>
</dbReference>
<dbReference type="RefSeq" id="NP_001269919.1">
    <molecule id="Q9BTZ2-5"/>
    <property type="nucleotide sequence ID" value="NM_001282990.2"/>
</dbReference>
<dbReference type="RefSeq" id="NP_001269920.1">
    <molecule id="Q9BTZ2-3"/>
    <property type="nucleotide sequence ID" value="NM_001282991.2"/>
</dbReference>
<dbReference type="RefSeq" id="NP_066284.2">
    <molecule id="Q9BTZ2-1"/>
    <property type="nucleotide sequence ID" value="NM_021004.3"/>
</dbReference>
<dbReference type="PDB" id="3O4R">
    <property type="method" value="X-ray"/>
    <property type="resolution" value="1.70 A"/>
    <property type="chains" value="A/B/C/D=19-278"/>
</dbReference>
<dbReference type="PDBsum" id="3O4R"/>
<dbReference type="SMR" id="Q9BTZ2"/>
<dbReference type="BioGRID" id="116107">
    <property type="interactions" value="91"/>
</dbReference>
<dbReference type="FunCoup" id="Q9BTZ2">
    <property type="interactions" value="1121"/>
</dbReference>
<dbReference type="IntAct" id="Q9BTZ2">
    <property type="interactions" value="63"/>
</dbReference>
<dbReference type="STRING" id="9606.ENSP00000326219"/>
<dbReference type="DrugBank" id="DB00162">
    <property type="generic name" value="Vitamin A"/>
</dbReference>
<dbReference type="GlyGen" id="Q9BTZ2">
    <property type="glycosylation" value="1 site"/>
</dbReference>
<dbReference type="iPTMnet" id="Q9BTZ2"/>
<dbReference type="PhosphoSitePlus" id="Q9BTZ2"/>
<dbReference type="SwissPalm" id="Q9BTZ2"/>
<dbReference type="BioMuta" id="DHRS4"/>
<dbReference type="DMDM" id="308153604"/>
<dbReference type="jPOST" id="Q9BTZ2"/>
<dbReference type="MassIVE" id="Q9BTZ2"/>
<dbReference type="PaxDb" id="9606-ENSP00000326219"/>
<dbReference type="PeptideAtlas" id="Q9BTZ2"/>
<dbReference type="ProteomicsDB" id="15267"/>
<dbReference type="ProteomicsDB" id="79032">
    <molecule id="Q9BTZ2-1"/>
</dbReference>
<dbReference type="ProteomicsDB" id="79033">
    <molecule id="Q9BTZ2-2"/>
</dbReference>
<dbReference type="ProteomicsDB" id="79034">
    <molecule id="Q9BTZ2-3"/>
</dbReference>
<dbReference type="ProteomicsDB" id="79035">
    <molecule id="Q9BTZ2-4"/>
</dbReference>
<dbReference type="ProteomicsDB" id="79036">
    <molecule id="Q9BTZ2-5"/>
</dbReference>
<dbReference type="ProteomicsDB" id="79037">
    <molecule id="Q9BTZ2-6"/>
</dbReference>
<dbReference type="ProteomicsDB" id="79038">
    <molecule id="Q9BTZ2-7"/>
</dbReference>
<dbReference type="Pumba" id="Q9BTZ2"/>
<dbReference type="Antibodypedia" id="8732">
    <property type="antibodies" value="182 antibodies from 26 providers"/>
</dbReference>
<dbReference type="DNASU" id="10901"/>
<dbReference type="Ensembl" id="ENST00000313250.10">
    <molecule id="Q9BTZ2-1"/>
    <property type="protein sequence ID" value="ENSP00000326219.5"/>
    <property type="gene ID" value="ENSG00000157326.19"/>
</dbReference>
<dbReference type="Ensembl" id="ENST00000397074.7">
    <molecule id="Q9BTZ2-3"/>
    <property type="protein sequence ID" value="ENSP00000380264.3"/>
    <property type="gene ID" value="ENSG00000157326.19"/>
</dbReference>
<dbReference type="Ensembl" id="ENST00000397075.7">
    <molecule id="Q9BTZ2-2"/>
    <property type="protein sequence ID" value="ENSP00000380265.3"/>
    <property type="gene ID" value="ENSG00000157326.19"/>
</dbReference>
<dbReference type="Ensembl" id="ENST00000558263.5">
    <molecule id="Q9BTZ2-7"/>
    <property type="protein sequence ID" value="ENSP00000453367.1"/>
    <property type="gene ID" value="ENSG00000157326.19"/>
</dbReference>
<dbReference type="Ensembl" id="ENST00000558581.5">
    <molecule id="Q9BTZ2-4"/>
    <property type="protein sequence ID" value="ENSP00000452645.1"/>
    <property type="gene ID" value="ENSG00000157326.19"/>
</dbReference>
<dbReference type="Ensembl" id="ENST00000559632.5">
    <molecule id="Q9BTZ2-5"/>
    <property type="protein sequence ID" value="ENSP00000453983.1"/>
    <property type="gene ID" value="ENSG00000157326.19"/>
</dbReference>
<dbReference type="Ensembl" id="ENST00000645602.2">
    <molecule id="Q9BTZ2-2"/>
    <property type="protein sequence ID" value="ENSP00000496349.1"/>
    <property type="gene ID" value="ENSG00000284807.3"/>
</dbReference>
<dbReference type="Ensembl" id="ENST00000646997.2">
    <molecule id="Q9BTZ2-5"/>
    <property type="protein sequence ID" value="ENSP00000495877.1"/>
    <property type="gene ID" value="ENSG00000284807.3"/>
</dbReference>
<dbReference type="Ensembl" id="ENST00000647030.2">
    <molecule id="Q9BTZ2-4"/>
    <property type="protein sequence ID" value="ENSP00000496426.1"/>
    <property type="gene ID" value="ENSG00000284807.3"/>
</dbReference>
<dbReference type="Ensembl" id="ENST00000647154.2">
    <molecule id="Q9BTZ2-3"/>
    <property type="protein sequence ID" value="ENSP00000495868.1"/>
    <property type="gene ID" value="ENSG00000284807.3"/>
</dbReference>
<dbReference type="Ensembl" id="ENST00000710583.1">
    <molecule id="Q9BTZ2-7"/>
    <property type="protein sequence ID" value="ENSP00000518354.1"/>
    <property type="gene ID" value="ENSG00000284807.3"/>
</dbReference>
<dbReference type="Ensembl" id="ENST00000710584.1">
    <molecule id="Q9BTZ2-1"/>
    <property type="protein sequence ID" value="ENSP00000518355.1"/>
    <property type="gene ID" value="ENSG00000284807.3"/>
</dbReference>
<dbReference type="GeneID" id="10901"/>
<dbReference type="KEGG" id="hsa:10901"/>
<dbReference type="MANE-Select" id="ENST00000313250.10">
    <property type="protein sequence ID" value="ENSP00000326219.5"/>
    <property type="RefSeq nucleotide sequence ID" value="NM_021004.4"/>
    <property type="RefSeq protein sequence ID" value="NP_066284.2"/>
</dbReference>
<dbReference type="UCSC" id="uc001wla.5">
    <molecule id="Q9BTZ2-1"/>
    <property type="organism name" value="human"/>
</dbReference>
<dbReference type="AGR" id="HGNC:16985"/>
<dbReference type="CTD" id="10901"/>
<dbReference type="DisGeNET" id="10901"/>
<dbReference type="GeneCards" id="DHRS4"/>
<dbReference type="HGNC" id="HGNC:16985">
    <property type="gene designation" value="DHRS4"/>
</dbReference>
<dbReference type="HPA" id="ENSG00000157326">
    <property type="expression patterns" value="Low tissue specificity"/>
</dbReference>
<dbReference type="MIM" id="611596">
    <property type="type" value="gene"/>
</dbReference>
<dbReference type="neXtProt" id="NX_Q9BTZ2"/>
<dbReference type="OpenTargets" id="ENSG00000157326"/>
<dbReference type="PharmGKB" id="PA128395792"/>
<dbReference type="VEuPathDB" id="HostDB:ENSG00000157326"/>
<dbReference type="eggNOG" id="KOG0725">
    <property type="taxonomic scope" value="Eukaryota"/>
</dbReference>
<dbReference type="GeneTree" id="ENSGT00940000158919"/>
<dbReference type="HOGENOM" id="CLU_010194_1_1_1"/>
<dbReference type="InParanoid" id="Q9BTZ2"/>
<dbReference type="OMA" id="WEVANVI"/>
<dbReference type="OrthoDB" id="3592703at2759"/>
<dbReference type="PAN-GO" id="Q9BTZ2">
    <property type="GO annotations" value="3 GO annotations based on evolutionary models"/>
</dbReference>
<dbReference type="PhylomeDB" id="Q9BTZ2"/>
<dbReference type="TreeFam" id="TF315405"/>
<dbReference type="BRENDA" id="1.1.1.300">
    <property type="organism ID" value="2681"/>
</dbReference>
<dbReference type="PathwayCommons" id="Q9BTZ2"/>
<dbReference type="Reactome" id="R-HSA-5365859">
    <property type="pathway name" value="RA biosynthesis pathway"/>
</dbReference>
<dbReference type="Reactome" id="R-HSA-9033241">
    <property type="pathway name" value="Peroxisomal protein import"/>
</dbReference>
<dbReference type="SignaLink" id="Q9BTZ2"/>
<dbReference type="BioGRID-ORCS" id="10901">
    <property type="hits" value="14 hits in 1152 CRISPR screens"/>
</dbReference>
<dbReference type="ChiTaRS" id="DHRS4">
    <property type="organism name" value="human"/>
</dbReference>
<dbReference type="EvolutionaryTrace" id="Q9BTZ2"/>
<dbReference type="GeneWiki" id="DHRS4"/>
<dbReference type="GenomeRNAi" id="10901"/>
<dbReference type="Pharos" id="Q9BTZ2">
    <property type="development level" value="Tbio"/>
</dbReference>
<dbReference type="PRO" id="PR:Q9BTZ2"/>
<dbReference type="Proteomes" id="UP000005640">
    <property type="component" value="Chromosome 14"/>
</dbReference>
<dbReference type="RNAct" id="Q9BTZ2">
    <property type="molecule type" value="protein"/>
</dbReference>
<dbReference type="Bgee" id="ENSG00000157326">
    <property type="expression patterns" value="Expressed in right lobe of liver and 98 other cell types or tissues"/>
</dbReference>
<dbReference type="ExpressionAtlas" id="Q9BTZ2">
    <property type="expression patterns" value="baseline and differential"/>
</dbReference>
<dbReference type="GO" id="GO:0005829">
    <property type="term" value="C:cytosol"/>
    <property type="evidence" value="ECO:0000304"/>
    <property type="project" value="Reactome"/>
</dbReference>
<dbReference type="GO" id="GO:0005789">
    <property type="term" value="C:endoplasmic reticulum membrane"/>
    <property type="evidence" value="ECO:0000304"/>
    <property type="project" value="Reactome"/>
</dbReference>
<dbReference type="GO" id="GO:0005739">
    <property type="term" value="C:mitochondrion"/>
    <property type="evidence" value="ECO:0006056"/>
    <property type="project" value="FlyBase"/>
</dbReference>
<dbReference type="GO" id="GO:0005634">
    <property type="term" value="C:nucleus"/>
    <property type="evidence" value="ECO:0000314"/>
    <property type="project" value="UniProtKB"/>
</dbReference>
<dbReference type="GO" id="GO:0005782">
    <property type="term" value="C:peroxisomal matrix"/>
    <property type="evidence" value="ECO:0000304"/>
    <property type="project" value="Reactome"/>
</dbReference>
<dbReference type="GO" id="GO:0005778">
    <property type="term" value="C:peroxisomal membrane"/>
    <property type="evidence" value="ECO:0007005"/>
    <property type="project" value="UniProtKB"/>
</dbReference>
<dbReference type="GO" id="GO:0005777">
    <property type="term" value="C:peroxisome"/>
    <property type="evidence" value="ECO:0000314"/>
    <property type="project" value="UniProtKB"/>
</dbReference>
<dbReference type="GO" id="GO:0033703">
    <property type="term" value="F:3-beta-hydroxy-5-beta-steroid dehydrogenase (NADP+) activity"/>
    <property type="evidence" value="ECO:0007669"/>
    <property type="project" value="RHEA"/>
</dbReference>
<dbReference type="GO" id="GO:0000253">
    <property type="term" value="F:3-beta-hydroxysteroid 3-dehydrogenase (NADP+) activity"/>
    <property type="evidence" value="ECO:0000314"/>
    <property type="project" value="UniProtKB"/>
</dbReference>
<dbReference type="GO" id="GO:0018455">
    <property type="term" value="F:alcohol dehydrogenase [NAD(P)+] activity"/>
    <property type="evidence" value="ECO:0000314"/>
    <property type="project" value="UniProtKB"/>
</dbReference>
<dbReference type="GO" id="GO:0052650">
    <property type="term" value="F:all-trans-retinol dehydrogenase (NADP+) activity"/>
    <property type="evidence" value="ECO:0000304"/>
    <property type="project" value="Reactome"/>
</dbReference>
<dbReference type="GO" id="GO:0004090">
    <property type="term" value="F:carbonyl reductase (NADPH) activity"/>
    <property type="evidence" value="ECO:0000314"/>
    <property type="project" value="UniProtKB"/>
</dbReference>
<dbReference type="GO" id="GO:0042802">
    <property type="term" value="F:identical protein binding"/>
    <property type="evidence" value="ECO:0000314"/>
    <property type="project" value="UniProtKB"/>
</dbReference>
<dbReference type="GO" id="GO:0016655">
    <property type="term" value="F:oxidoreductase activity, acting on NAD(P)H, quinone or similar compound as acceptor"/>
    <property type="evidence" value="ECO:0000314"/>
    <property type="project" value="UniProtKB"/>
</dbReference>
<dbReference type="GO" id="GO:0006066">
    <property type="term" value="P:alcohol metabolic process"/>
    <property type="evidence" value="ECO:0000314"/>
    <property type="project" value="UniProtKB"/>
</dbReference>
<dbReference type="GO" id="GO:0042180">
    <property type="term" value="P:ketone metabolic process"/>
    <property type="evidence" value="ECO:0000314"/>
    <property type="project" value="UniProtKB"/>
</dbReference>
<dbReference type="GO" id="GO:2000379">
    <property type="term" value="P:positive regulation of reactive oxygen species metabolic process"/>
    <property type="evidence" value="ECO:0000314"/>
    <property type="project" value="UniProtKB"/>
</dbReference>
<dbReference type="GO" id="GO:0042574">
    <property type="term" value="P:retinal metabolic process"/>
    <property type="evidence" value="ECO:0000318"/>
    <property type="project" value="GO_Central"/>
</dbReference>
<dbReference type="GO" id="GO:0008202">
    <property type="term" value="P:steroid metabolic process"/>
    <property type="evidence" value="ECO:0000314"/>
    <property type="project" value="UniProtKB"/>
</dbReference>
<dbReference type="CDD" id="cd08936">
    <property type="entry name" value="CR_SDR_c"/>
    <property type="match status" value="1"/>
</dbReference>
<dbReference type="FunFam" id="3.40.50.720:FF:000084">
    <property type="entry name" value="Short-chain dehydrogenase reductase"/>
    <property type="match status" value="1"/>
</dbReference>
<dbReference type="Gene3D" id="3.40.50.720">
    <property type="entry name" value="NAD(P)-binding Rossmann-like Domain"/>
    <property type="match status" value="1"/>
</dbReference>
<dbReference type="InterPro" id="IPR036291">
    <property type="entry name" value="NAD(P)-bd_dom_sf"/>
</dbReference>
<dbReference type="InterPro" id="IPR020904">
    <property type="entry name" value="Sc_DH/Rdtase_CS"/>
</dbReference>
<dbReference type="InterPro" id="IPR002347">
    <property type="entry name" value="SDR_fam"/>
</dbReference>
<dbReference type="NCBIfam" id="NF005559">
    <property type="entry name" value="PRK07231.1"/>
    <property type="match status" value="1"/>
</dbReference>
<dbReference type="PANTHER" id="PTHR43943">
    <property type="entry name" value="DEHYDROGENASE/REDUCTASE (SDR FAMILY) MEMBER 4"/>
    <property type="match status" value="1"/>
</dbReference>
<dbReference type="PANTHER" id="PTHR43943:SF8">
    <property type="entry name" value="DEHYDROGENASE_REDUCTASE SDR FAMILY MEMBER 4-RELATED"/>
    <property type="match status" value="1"/>
</dbReference>
<dbReference type="Pfam" id="PF13561">
    <property type="entry name" value="adh_short_C2"/>
    <property type="match status" value="1"/>
</dbReference>
<dbReference type="PRINTS" id="PR00081">
    <property type="entry name" value="GDHRDH"/>
</dbReference>
<dbReference type="PRINTS" id="PR00080">
    <property type="entry name" value="SDRFAMILY"/>
</dbReference>
<dbReference type="SUPFAM" id="SSF51735">
    <property type="entry name" value="NAD(P)-binding Rossmann-fold domains"/>
    <property type="match status" value="1"/>
</dbReference>
<dbReference type="PROSITE" id="PS00061">
    <property type="entry name" value="ADH_SHORT"/>
    <property type="match status" value="1"/>
</dbReference>
<evidence type="ECO:0000250" key="1">
    <source>
        <dbReference type="UniProtKB" id="Q8WNV7"/>
    </source>
</evidence>
<evidence type="ECO:0000250" key="2">
    <source>
        <dbReference type="UniProtKB" id="Q99714"/>
    </source>
</evidence>
<evidence type="ECO:0000250" key="3">
    <source>
        <dbReference type="UniProtKB" id="Q99LB2"/>
    </source>
</evidence>
<evidence type="ECO:0000255" key="4">
    <source>
        <dbReference type="PROSITE-ProRule" id="PRU10001"/>
    </source>
</evidence>
<evidence type="ECO:0000269" key="5">
    <source>
    </source>
</evidence>
<evidence type="ECO:0000269" key="6">
    <source>
    </source>
</evidence>
<evidence type="ECO:0000269" key="7">
    <source>
    </source>
</evidence>
<evidence type="ECO:0000269" key="8">
    <source>
    </source>
</evidence>
<evidence type="ECO:0000269" key="9">
    <source>
    </source>
</evidence>
<evidence type="ECO:0000269" key="10">
    <source>
    </source>
</evidence>
<evidence type="ECO:0000269" key="11">
    <source>
    </source>
</evidence>
<evidence type="ECO:0000303" key="12">
    <source>
    </source>
</evidence>
<evidence type="ECO:0000303" key="13">
    <source>
    </source>
</evidence>
<evidence type="ECO:0000303" key="14">
    <source>
    </source>
</evidence>
<evidence type="ECO:0000303" key="15">
    <source>
    </source>
</evidence>
<evidence type="ECO:0000303" key="16">
    <source>
    </source>
</evidence>
<evidence type="ECO:0000303" key="17">
    <source ref="5"/>
</evidence>
<evidence type="ECO:0000305" key="18"/>
<evidence type="ECO:0000305" key="19">
    <source>
    </source>
</evidence>
<evidence type="ECO:0000305" key="20">
    <source>
    </source>
</evidence>
<evidence type="ECO:0000305" key="21">
    <source>
    </source>
</evidence>
<evidence type="ECO:0000312" key="22">
    <source>
        <dbReference type="HGNC" id="HGNC:16985"/>
    </source>
</evidence>
<evidence type="ECO:0007744" key="23">
    <source>
    </source>
</evidence>
<evidence type="ECO:0007829" key="24">
    <source>
        <dbReference type="PDB" id="3O4R"/>
    </source>
</evidence>
<keyword id="KW-0002">3D-structure</keyword>
<keyword id="KW-0007">Acetylation</keyword>
<keyword id="KW-0025">Alternative splicing</keyword>
<keyword id="KW-0521">NADP</keyword>
<keyword id="KW-0539">Nucleus</keyword>
<keyword id="KW-0560">Oxidoreductase</keyword>
<keyword id="KW-0576">Peroxisome</keyword>
<keyword id="KW-0597">Phosphoprotein</keyword>
<keyword id="KW-1267">Proteomics identification</keyword>
<keyword id="KW-1185">Reference proteome</keyword>
<protein>
    <recommendedName>
        <fullName evidence="15">Dehydrogenase/reductase SDR family member 4</fullName>
        <ecNumber evidence="7 8 10">1.1.1.184</ecNumber>
    </recommendedName>
    <alternativeName>
        <fullName evidence="1">NADPH-dependent carbonyl reductase</fullName>
        <shortName evidence="1">CR</shortName>
    </alternativeName>
    <alternativeName>
        <fullName evidence="16">NADPH-dependent retinol dehydrogenase/reductase</fullName>
        <shortName evidence="16">NRDR</shortName>
        <shortName>humNRDR</shortName>
    </alternativeName>
    <alternativeName>
        <fullName>Peroxisomal short-chain alcohol dehydrogenase</fullName>
        <shortName>PSCD</shortName>
    </alternativeName>
    <alternativeName>
        <fullName>SCAD-SRL</fullName>
    </alternativeName>
    <alternativeName>
        <fullName evidence="15">Short chain dehydrogenase/reductase family 25C member 2</fullName>
        <shortName evidence="15">Protein SDR25C2</shortName>
    </alternativeName>
    <alternativeName>
        <fullName>Short-chain dehydrogenase/reductase family member 4</fullName>
    </alternativeName>
</protein>
<gene>
    <name evidence="22" type="primary">DHRS4</name>
    <name evidence="15" type="synonym">SDR25C2</name>
    <name type="ORF">UNQ851/PRO1800</name>
</gene>